<accession>P0AAP6</accession>
<accession>P77723</accession>
<protein>
    <recommendedName>
        <fullName evidence="1">Inhibitor of hydrogen peroxide resistance</fullName>
    </recommendedName>
</protein>
<gene>
    <name evidence="1" type="primary">iprA</name>
    <name type="synonym">yaiV</name>
    <name type="ordered locus">Z0470</name>
    <name type="ordered locus">ECs0425</name>
</gene>
<comment type="function">
    <text evidence="1">Involved in oxidative stress resistance.</text>
</comment>
<comment type="similarity">
    <text evidence="1">Belongs to the IprA family.</text>
</comment>
<comment type="sequence caution" evidence="2">
    <conflict type="erroneous initiation">
        <sequence resource="EMBL-CDS" id="AAG54721"/>
    </conflict>
    <text>Extended N-terminus.</text>
</comment>
<evidence type="ECO:0000255" key="1">
    <source>
        <dbReference type="HAMAP-Rule" id="MF_02072"/>
    </source>
</evidence>
<evidence type="ECO:0000305" key="2"/>
<keyword id="KW-1185">Reference proteome</keyword>
<keyword id="KW-0346">Stress response</keyword>
<feature type="chain" id="PRO_0000168597" description="Inhibitor of hydrogen peroxide resistance">
    <location>
        <begin position="1"/>
        <end position="207"/>
    </location>
</feature>
<feature type="DNA-binding region" description="H-T-H motif" evidence="1">
    <location>
        <begin position="163"/>
        <end position="182"/>
    </location>
</feature>
<reference key="1">
    <citation type="journal article" date="2001" name="Nature">
        <title>Genome sequence of enterohaemorrhagic Escherichia coli O157:H7.</title>
        <authorList>
            <person name="Perna N.T."/>
            <person name="Plunkett G. III"/>
            <person name="Burland V."/>
            <person name="Mau B."/>
            <person name="Glasner J.D."/>
            <person name="Rose D.J."/>
            <person name="Mayhew G.F."/>
            <person name="Evans P.S."/>
            <person name="Gregor J."/>
            <person name="Kirkpatrick H.A."/>
            <person name="Posfai G."/>
            <person name="Hackett J."/>
            <person name="Klink S."/>
            <person name="Boutin A."/>
            <person name="Shao Y."/>
            <person name="Miller L."/>
            <person name="Grotbeck E.J."/>
            <person name="Davis N.W."/>
            <person name="Lim A."/>
            <person name="Dimalanta E.T."/>
            <person name="Potamousis K."/>
            <person name="Apodaca J."/>
            <person name="Anantharaman T.S."/>
            <person name="Lin J."/>
            <person name="Yen G."/>
            <person name="Schwartz D.C."/>
            <person name="Welch R.A."/>
            <person name="Blattner F.R."/>
        </authorList>
    </citation>
    <scope>NUCLEOTIDE SEQUENCE [LARGE SCALE GENOMIC DNA]</scope>
    <source>
        <strain>O157:H7 / EDL933 / ATCC 700927 / EHEC</strain>
    </source>
</reference>
<reference key="2">
    <citation type="journal article" date="2001" name="DNA Res.">
        <title>Complete genome sequence of enterohemorrhagic Escherichia coli O157:H7 and genomic comparison with a laboratory strain K-12.</title>
        <authorList>
            <person name="Hayashi T."/>
            <person name="Makino K."/>
            <person name="Ohnishi M."/>
            <person name="Kurokawa K."/>
            <person name="Ishii K."/>
            <person name="Yokoyama K."/>
            <person name="Han C.-G."/>
            <person name="Ohtsubo E."/>
            <person name="Nakayama K."/>
            <person name="Murata T."/>
            <person name="Tanaka M."/>
            <person name="Tobe T."/>
            <person name="Iida T."/>
            <person name="Takami H."/>
            <person name="Honda T."/>
            <person name="Sasakawa C."/>
            <person name="Ogasawara N."/>
            <person name="Yasunaga T."/>
            <person name="Kuhara S."/>
            <person name="Shiba T."/>
            <person name="Hattori M."/>
            <person name="Shinagawa H."/>
        </authorList>
    </citation>
    <scope>NUCLEOTIDE SEQUENCE [LARGE SCALE GENOMIC DNA]</scope>
    <source>
        <strain>O157:H7 / Sakai / RIMD 0509952 / EHEC</strain>
    </source>
</reference>
<dbReference type="EMBL" id="AE005174">
    <property type="protein sequence ID" value="AAG54721.1"/>
    <property type="status" value="ALT_INIT"/>
    <property type="molecule type" value="Genomic_DNA"/>
</dbReference>
<dbReference type="EMBL" id="BA000007">
    <property type="protein sequence ID" value="BAB33848.2"/>
    <property type="molecule type" value="Genomic_DNA"/>
</dbReference>
<dbReference type="PIR" id="A90682">
    <property type="entry name" value="A90682"/>
</dbReference>
<dbReference type="PIR" id="E85532">
    <property type="entry name" value="E85532"/>
</dbReference>
<dbReference type="RefSeq" id="NP_308452.2">
    <property type="nucleotide sequence ID" value="NC_002695.1"/>
</dbReference>
<dbReference type="RefSeq" id="WP_001295335.1">
    <property type="nucleotide sequence ID" value="NZ_VOAI01000005.1"/>
</dbReference>
<dbReference type="SMR" id="P0AAP6"/>
<dbReference type="STRING" id="155864.Z0470"/>
<dbReference type="GeneID" id="914527"/>
<dbReference type="GeneID" id="93777087"/>
<dbReference type="KEGG" id="ece:Z0470"/>
<dbReference type="KEGG" id="ecs:ECs_0425"/>
<dbReference type="PATRIC" id="fig|386585.9.peg.520"/>
<dbReference type="eggNOG" id="COG0664">
    <property type="taxonomic scope" value="Bacteria"/>
</dbReference>
<dbReference type="HOGENOM" id="CLU_080453_0_0_6"/>
<dbReference type="OMA" id="MAEWDET"/>
<dbReference type="Proteomes" id="UP000000558">
    <property type="component" value="Chromosome"/>
</dbReference>
<dbReference type="Proteomes" id="UP000002519">
    <property type="component" value="Chromosome"/>
</dbReference>
<dbReference type="GO" id="GO:0006979">
    <property type="term" value="P:response to oxidative stress"/>
    <property type="evidence" value="ECO:0007669"/>
    <property type="project" value="UniProtKB-UniRule"/>
</dbReference>
<dbReference type="Gene3D" id="2.60.120.10">
    <property type="entry name" value="Jelly Rolls"/>
    <property type="match status" value="1"/>
</dbReference>
<dbReference type="HAMAP" id="MF_02072">
    <property type="entry name" value="IprA"/>
    <property type="match status" value="1"/>
</dbReference>
<dbReference type="InterPro" id="IPR018490">
    <property type="entry name" value="cNMP-bd_dom_sf"/>
</dbReference>
<dbReference type="InterPro" id="IPR041687">
    <property type="entry name" value="HTH_46"/>
</dbReference>
<dbReference type="InterPro" id="IPR034719">
    <property type="entry name" value="IprA"/>
</dbReference>
<dbReference type="InterPro" id="IPR014710">
    <property type="entry name" value="RmlC-like_jellyroll"/>
</dbReference>
<dbReference type="NCBIfam" id="NF008810">
    <property type="entry name" value="PRK11832.1"/>
    <property type="match status" value="1"/>
</dbReference>
<dbReference type="Pfam" id="PF15977">
    <property type="entry name" value="HTH_46"/>
    <property type="match status" value="1"/>
</dbReference>
<dbReference type="SUPFAM" id="SSF51206">
    <property type="entry name" value="cAMP-binding domain-like"/>
    <property type="match status" value="1"/>
</dbReference>
<proteinExistence type="inferred from homology"/>
<organism>
    <name type="scientific">Escherichia coli O157:H7</name>
    <dbReference type="NCBI Taxonomy" id="83334"/>
    <lineage>
        <taxon>Bacteria</taxon>
        <taxon>Pseudomonadati</taxon>
        <taxon>Pseudomonadota</taxon>
        <taxon>Gammaproteobacteria</taxon>
        <taxon>Enterobacterales</taxon>
        <taxon>Enterobacteriaceae</taxon>
        <taxon>Escherichia</taxon>
    </lineage>
</organism>
<name>IPRA_ECO57</name>
<sequence>MLSVVKPLQEFGKLDKCLSRYGTRFEFNNEKQVIFSSDVNNEDTFVILEGVISLRREENVLIGITQAPYIMGLADGLMKNDIPYKLISEGNCTGYHLPAKQTITLIEQNQLWRDAFYWLAWQNRILELRDVQLIGHNSYEQIRATLLSMIDWNEELRSRIGVMNYIHQRTRISRSVVAEVLAALRKGGYIEMNKGKLVAINRLPSEY</sequence>